<reference key="1">
    <citation type="journal article" date="2006" name="Genome Res.">
        <title>Skewed genomic variability in strains of the toxigenic bacterial pathogen, Clostridium perfringens.</title>
        <authorList>
            <person name="Myers G.S.A."/>
            <person name="Rasko D.A."/>
            <person name="Cheung J.K."/>
            <person name="Ravel J."/>
            <person name="Seshadri R."/>
            <person name="DeBoy R.T."/>
            <person name="Ren Q."/>
            <person name="Varga J."/>
            <person name="Awad M.M."/>
            <person name="Brinkac L.M."/>
            <person name="Daugherty S.C."/>
            <person name="Haft D.H."/>
            <person name="Dodson R.J."/>
            <person name="Madupu R."/>
            <person name="Nelson W.C."/>
            <person name="Rosovitz M.J."/>
            <person name="Sullivan S.A."/>
            <person name="Khouri H."/>
            <person name="Dimitrov G.I."/>
            <person name="Watkins K.L."/>
            <person name="Mulligan S."/>
            <person name="Benton J."/>
            <person name="Radune D."/>
            <person name="Fisher D.J."/>
            <person name="Atkins H.S."/>
            <person name="Hiscox T."/>
            <person name="Jost B.H."/>
            <person name="Billington S.J."/>
            <person name="Songer J.G."/>
            <person name="McClane B.A."/>
            <person name="Titball R.W."/>
            <person name="Rood J.I."/>
            <person name="Melville S.B."/>
            <person name="Paulsen I.T."/>
        </authorList>
    </citation>
    <scope>NUCLEOTIDE SEQUENCE [LARGE SCALE GENOMIC DNA]</scope>
    <source>
        <strain>SM101 / Type A</strain>
    </source>
</reference>
<gene>
    <name evidence="1" type="primary">pgk</name>
    <name type="ordered locus">CPR_1300</name>
</gene>
<feature type="chain" id="PRO_1000009611" description="Phosphoglycerate kinase">
    <location>
        <begin position="1"/>
        <end position="397"/>
    </location>
</feature>
<feature type="binding site" evidence="1">
    <location>
        <begin position="23"/>
        <end position="25"/>
    </location>
    <ligand>
        <name>substrate</name>
    </ligand>
</feature>
<feature type="binding site" evidence="1">
    <location>
        <position position="38"/>
    </location>
    <ligand>
        <name>substrate</name>
    </ligand>
</feature>
<feature type="binding site" evidence="1">
    <location>
        <begin position="61"/>
        <end position="64"/>
    </location>
    <ligand>
        <name>substrate</name>
    </ligand>
</feature>
<feature type="binding site" evidence="1">
    <location>
        <position position="122"/>
    </location>
    <ligand>
        <name>substrate</name>
    </ligand>
</feature>
<feature type="binding site" evidence="1">
    <location>
        <position position="155"/>
    </location>
    <ligand>
        <name>substrate</name>
    </ligand>
</feature>
<feature type="binding site" evidence="1">
    <location>
        <position position="206"/>
    </location>
    <ligand>
        <name>ATP</name>
        <dbReference type="ChEBI" id="CHEBI:30616"/>
    </ligand>
</feature>
<feature type="binding site" evidence="1">
    <location>
        <position position="296"/>
    </location>
    <ligand>
        <name>ATP</name>
        <dbReference type="ChEBI" id="CHEBI:30616"/>
    </ligand>
</feature>
<feature type="binding site" evidence="1">
    <location>
        <position position="327"/>
    </location>
    <ligand>
        <name>ATP</name>
        <dbReference type="ChEBI" id="CHEBI:30616"/>
    </ligand>
</feature>
<feature type="binding site" evidence="1">
    <location>
        <begin position="353"/>
        <end position="356"/>
    </location>
    <ligand>
        <name>ATP</name>
        <dbReference type="ChEBI" id="CHEBI:30616"/>
    </ligand>
</feature>
<proteinExistence type="inferred from homology"/>
<accession>Q0STD5</accession>
<keyword id="KW-0067">ATP-binding</keyword>
<keyword id="KW-0963">Cytoplasm</keyword>
<keyword id="KW-0324">Glycolysis</keyword>
<keyword id="KW-0418">Kinase</keyword>
<keyword id="KW-0547">Nucleotide-binding</keyword>
<keyword id="KW-0808">Transferase</keyword>
<sequence>MNFNKKTIEDVQVKGKKVLVRCDFNVPLKDGVITDENRLNGAMPTIKYLVDNGAQVILCSHMGKPKGEAKPEFSLAPVAKRLSEMLGKEVVFAADDNVVGENAKKAVAEMKDGDVVLLQNTRYRKEETKNGEELSKELASLAEMFVNDAFGTAHRAHCSTVGVTEYLKPAVCGYLIQKELKFLGDAVETPERPFVAILGGAKVSDKINVINNLLEKVDTLIIGGGMAYTFLKAQGYTVGSSLVEEDKVEYAKEMLAKAEEKGVKLLLPVDHRVAKEFKDVEAVVTEDQNIAEGFMGLDIGPKTEAIYAEAIKDAKTVIWNGPMGVFEFENFNKGTIAVAKAMAEADATTIIGGGDSAAAVNILGFGDKMSHISTGGGASLEFLEGKVLPGIAALNDK</sequence>
<protein>
    <recommendedName>
        <fullName evidence="1">Phosphoglycerate kinase</fullName>
        <ecNumber evidence="1">2.7.2.3</ecNumber>
    </recommendedName>
</protein>
<name>PGK_CLOPS</name>
<comment type="catalytic activity">
    <reaction evidence="1">
        <text>(2R)-3-phosphoglycerate + ATP = (2R)-3-phospho-glyceroyl phosphate + ADP</text>
        <dbReference type="Rhea" id="RHEA:14801"/>
        <dbReference type="ChEBI" id="CHEBI:30616"/>
        <dbReference type="ChEBI" id="CHEBI:57604"/>
        <dbReference type="ChEBI" id="CHEBI:58272"/>
        <dbReference type="ChEBI" id="CHEBI:456216"/>
        <dbReference type="EC" id="2.7.2.3"/>
    </reaction>
</comment>
<comment type="pathway">
    <text evidence="1">Carbohydrate degradation; glycolysis; pyruvate from D-glyceraldehyde 3-phosphate: step 2/5.</text>
</comment>
<comment type="subunit">
    <text evidence="1">Monomer.</text>
</comment>
<comment type="subcellular location">
    <subcellularLocation>
        <location evidence="1">Cytoplasm</location>
    </subcellularLocation>
</comment>
<comment type="similarity">
    <text evidence="1">Belongs to the phosphoglycerate kinase family.</text>
</comment>
<organism>
    <name type="scientific">Clostridium perfringens (strain SM101 / Type A)</name>
    <dbReference type="NCBI Taxonomy" id="289380"/>
    <lineage>
        <taxon>Bacteria</taxon>
        <taxon>Bacillati</taxon>
        <taxon>Bacillota</taxon>
        <taxon>Clostridia</taxon>
        <taxon>Eubacteriales</taxon>
        <taxon>Clostridiaceae</taxon>
        <taxon>Clostridium</taxon>
    </lineage>
</organism>
<dbReference type="EC" id="2.7.2.3" evidence="1"/>
<dbReference type="EMBL" id="CP000312">
    <property type="protein sequence ID" value="ABG86096.1"/>
    <property type="molecule type" value="Genomic_DNA"/>
</dbReference>
<dbReference type="RefSeq" id="WP_011592282.1">
    <property type="nucleotide sequence ID" value="NC_008262.1"/>
</dbReference>
<dbReference type="SMR" id="Q0STD5"/>
<dbReference type="KEGG" id="cpr:CPR_1300"/>
<dbReference type="UniPathway" id="UPA00109">
    <property type="reaction ID" value="UER00185"/>
</dbReference>
<dbReference type="Proteomes" id="UP000001824">
    <property type="component" value="Chromosome"/>
</dbReference>
<dbReference type="GO" id="GO:0005829">
    <property type="term" value="C:cytosol"/>
    <property type="evidence" value="ECO:0007669"/>
    <property type="project" value="TreeGrafter"/>
</dbReference>
<dbReference type="GO" id="GO:0043531">
    <property type="term" value="F:ADP binding"/>
    <property type="evidence" value="ECO:0007669"/>
    <property type="project" value="TreeGrafter"/>
</dbReference>
<dbReference type="GO" id="GO:0005524">
    <property type="term" value="F:ATP binding"/>
    <property type="evidence" value="ECO:0007669"/>
    <property type="project" value="UniProtKB-KW"/>
</dbReference>
<dbReference type="GO" id="GO:0004618">
    <property type="term" value="F:phosphoglycerate kinase activity"/>
    <property type="evidence" value="ECO:0007669"/>
    <property type="project" value="UniProtKB-UniRule"/>
</dbReference>
<dbReference type="GO" id="GO:0006094">
    <property type="term" value="P:gluconeogenesis"/>
    <property type="evidence" value="ECO:0007669"/>
    <property type="project" value="TreeGrafter"/>
</dbReference>
<dbReference type="GO" id="GO:0006096">
    <property type="term" value="P:glycolytic process"/>
    <property type="evidence" value="ECO:0007669"/>
    <property type="project" value="UniProtKB-UniRule"/>
</dbReference>
<dbReference type="CDD" id="cd00318">
    <property type="entry name" value="Phosphoglycerate_kinase"/>
    <property type="match status" value="1"/>
</dbReference>
<dbReference type="FunFam" id="3.40.50.1260:FF:000007">
    <property type="entry name" value="Phosphoglycerate kinase"/>
    <property type="match status" value="1"/>
</dbReference>
<dbReference type="FunFam" id="3.40.50.1260:FF:000008">
    <property type="entry name" value="Phosphoglycerate kinase"/>
    <property type="match status" value="1"/>
</dbReference>
<dbReference type="Gene3D" id="3.40.50.1260">
    <property type="entry name" value="Phosphoglycerate kinase, N-terminal domain"/>
    <property type="match status" value="2"/>
</dbReference>
<dbReference type="HAMAP" id="MF_00145">
    <property type="entry name" value="Phosphoglyc_kinase"/>
    <property type="match status" value="1"/>
</dbReference>
<dbReference type="InterPro" id="IPR001576">
    <property type="entry name" value="Phosphoglycerate_kinase"/>
</dbReference>
<dbReference type="InterPro" id="IPR015911">
    <property type="entry name" value="Phosphoglycerate_kinase_CS"/>
</dbReference>
<dbReference type="InterPro" id="IPR015824">
    <property type="entry name" value="Phosphoglycerate_kinase_N"/>
</dbReference>
<dbReference type="InterPro" id="IPR036043">
    <property type="entry name" value="Phosphoglycerate_kinase_sf"/>
</dbReference>
<dbReference type="PANTHER" id="PTHR11406">
    <property type="entry name" value="PHOSPHOGLYCERATE KINASE"/>
    <property type="match status" value="1"/>
</dbReference>
<dbReference type="PANTHER" id="PTHR11406:SF23">
    <property type="entry name" value="PHOSPHOGLYCERATE KINASE 1, CHLOROPLASTIC-RELATED"/>
    <property type="match status" value="1"/>
</dbReference>
<dbReference type="Pfam" id="PF00162">
    <property type="entry name" value="PGK"/>
    <property type="match status" value="1"/>
</dbReference>
<dbReference type="PIRSF" id="PIRSF000724">
    <property type="entry name" value="Pgk"/>
    <property type="match status" value="1"/>
</dbReference>
<dbReference type="PRINTS" id="PR00477">
    <property type="entry name" value="PHGLYCKINASE"/>
</dbReference>
<dbReference type="SUPFAM" id="SSF53748">
    <property type="entry name" value="Phosphoglycerate kinase"/>
    <property type="match status" value="1"/>
</dbReference>
<dbReference type="PROSITE" id="PS00111">
    <property type="entry name" value="PGLYCERATE_KINASE"/>
    <property type="match status" value="1"/>
</dbReference>
<evidence type="ECO:0000255" key="1">
    <source>
        <dbReference type="HAMAP-Rule" id="MF_00145"/>
    </source>
</evidence>